<dbReference type="EC" id="1.1.1.103" evidence="1"/>
<dbReference type="EMBL" id="CU928145">
    <property type="protein sequence ID" value="CAV00609.1"/>
    <property type="molecule type" value="Genomic_DNA"/>
</dbReference>
<dbReference type="RefSeq" id="WP_000646014.1">
    <property type="nucleotide sequence ID" value="NZ_CP028304.1"/>
</dbReference>
<dbReference type="SMR" id="B7L742"/>
<dbReference type="GeneID" id="93778332"/>
<dbReference type="KEGG" id="eck:EC55989_4083"/>
<dbReference type="HOGENOM" id="CLU_026673_11_0_6"/>
<dbReference type="UniPathway" id="UPA00046">
    <property type="reaction ID" value="UER00505"/>
</dbReference>
<dbReference type="Proteomes" id="UP000000746">
    <property type="component" value="Chromosome"/>
</dbReference>
<dbReference type="GO" id="GO:0005737">
    <property type="term" value="C:cytoplasm"/>
    <property type="evidence" value="ECO:0007669"/>
    <property type="project" value="UniProtKB-SubCell"/>
</dbReference>
<dbReference type="GO" id="GO:0008743">
    <property type="term" value="F:L-threonine 3-dehydrogenase activity"/>
    <property type="evidence" value="ECO:0007669"/>
    <property type="project" value="UniProtKB-UniRule"/>
</dbReference>
<dbReference type="GO" id="GO:0008270">
    <property type="term" value="F:zinc ion binding"/>
    <property type="evidence" value="ECO:0007669"/>
    <property type="project" value="UniProtKB-UniRule"/>
</dbReference>
<dbReference type="GO" id="GO:0019518">
    <property type="term" value="P:L-threonine catabolic process to glycine"/>
    <property type="evidence" value="ECO:0007669"/>
    <property type="project" value="UniProtKB-UniPathway"/>
</dbReference>
<dbReference type="FunFam" id="3.40.50.720:FF:000059">
    <property type="entry name" value="L-threonine 3-dehydrogenase"/>
    <property type="match status" value="1"/>
</dbReference>
<dbReference type="Gene3D" id="3.90.180.10">
    <property type="entry name" value="Medium-chain alcohol dehydrogenases, catalytic domain"/>
    <property type="match status" value="1"/>
</dbReference>
<dbReference type="Gene3D" id="3.40.50.720">
    <property type="entry name" value="NAD(P)-binding Rossmann-like Domain"/>
    <property type="match status" value="1"/>
</dbReference>
<dbReference type="HAMAP" id="MF_00627">
    <property type="entry name" value="Thr_dehydrog"/>
    <property type="match status" value="1"/>
</dbReference>
<dbReference type="InterPro" id="IPR013149">
    <property type="entry name" value="ADH-like_C"/>
</dbReference>
<dbReference type="InterPro" id="IPR013154">
    <property type="entry name" value="ADH-like_N"/>
</dbReference>
<dbReference type="InterPro" id="IPR002328">
    <property type="entry name" value="ADH_Zn_CS"/>
</dbReference>
<dbReference type="InterPro" id="IPR011032">
    <property type="entry name" value="GroES-like_sf"/>
</dbReference>
<dbReference type="InterPro" id="IPR004627">
    <property type="entry name" value="L-Threonine_3-DHase"/>
</dbReference>
<dbReference type="InterPro" id="IPR036291">
    <property type="entry name" value="NAD(P)-bd_dom_sf"/>
</dbReference>
<dbReference type="InterPro" id="IPR020843">
    <property type="entry name" value="PKS_ER"/>
</dbReference>
<dbReference type="InterPro" id="IPR050129">
    <property type="entry name" value="Zn_alcohol_dh"/>
</dbReference>
<dbReference type="NCBIfam" id="NF003808">
    <property type="entry name" value="PRK05396.1"/>
    <property type="match status" value="1"/>
</dbReference>
<dbReference type="NCBIfam" id="TIGR00692">
    <property type="entry name" value="tdh"/>
    <property type="match status" value="1"/>
</dbReference>
<dbReference type="PANTHER" id="PTHR43401">
    <property type="entry name" value="L-THREONINE 3-DEHYDROGENASE"/>
    <property type="match status" value="1"/>
</dbReference>
<dbReference type="PANTHER" id="PTHR43401:SF2">
    <property type="entry name" value="L-THREONINE 3-DEHYDROGENASE"/>
    <property type="match status" value="1"/>
</dbReference>
<dbReference type="Pfam" id="PF08240">
    <property type="entry name" value="ADH_N"/>
    <property type="match status" value="1"/>
</dbReference>
<dbReference type="Pfam" id="PF00107">
    <property type="entry name" value="ADH_zinc_N"/>
    <property type="match status" value="1"/>
</dbReference>
<dbReference type="SMART" id="SM00829">
    <property type="entry name" value="PKS_ER"/>
    <property type="match status" value="1"/>
</dbReference>
<dbReference type="SUPFAM" id="SSF50129">
    <property type="entry name" value="GroES-like"/>
    <property type="match status" value="1"/>
</dbReference>
<dbReference type="SUPFAM" id="SSF51735">
    <property type="entry name" value="NAD(P)-binding Rossmann-fold domains"/>
    <property type="match status" value="1"/>
</dbReference>
<dbReference type="PROSITE" id="PS00059">
    <property type="entry name" value="ADH_ZINC"/>
    <property type="match status" value="1"/>
</dbReference>
<sequence length="341" mass="37255">MKALSKLKAEEGIWMTDVPVPELGHNDLLIKIRKTAICGTDVHIYNWDEWSQKTIPVPMVVGHEYVGEVVGIGQEVKGFKIGDRVSGEGHITCGHCRNCRGGRTHLCRNTIGVGVNRPGCFAEYLVIPAFNAFKIPDNISDDLASIFDPFGNAVHTALSFDLVGEDVLVSGAGPIGIMAAAVAKHVGARNVVITDVNEYRLELARKMGITRAVNVAKENLNDVMAELGMTEGFDVGLEMSGAPPAFRTMLDTMNHGGRIAMLGIPPSDMSIDWTKVIFKGLFIKGIYGREMFETWYKMAALIQSGLDLSPIITHRFSIDDFQKGFDAMRSGQSGKVILSWD</sequence>
<proteinExistence type="inferred from homology"/>
<evidence type="ECO:0000255" key="1">
    <source>
        <dbReference type="HAMAP-Rule" id="MF_00627"/>
    </source>
</evidence>
<feature type="chain" id="PRO_1000147260" description="L-threonine 3-dehydrogenase">
    <location>
        <begin position="1"/>
        <end position="341"/>
    </location>
</feature>
<feature type="active site" description="Charge relay system" evidence="1">
    <location>
        <position position="40"/>
    </location>
</feature>
<feature type="active site" description="Charge relay system" evidence="1">
    <location>
        <position position="43"/>
    </location>
</feature>
<feature type="binding site" evidence="1">
    <location>
        <position position="38"/>
    </location>
    <ligand>
        <name>Zn(2+)</name>
        <dbReference type="ChEBI" id="CHEBI:29105"/>
        <label>1</label>
        <note>catalytic</note>
    </ligand>
</feature>
<feature type="binding site" evidence="1">
    <location>
        <position position="63"/>
    </location>
    <ligand>
        <name>Zn(2+)</name>
        <dbReference type="ChEBI" id="CHEBI:29105"/>
        <label>1</label>
        <note>catalytic</note>
    </ligand>
</feature>
<feature type="binding site" evidence="1">
    <location>
        <position position="64"/>
    </location>
    <ligand>
        <name>Zn(2+)</name>
        <dbReference type="ChEBI" id="CHEBI:29105"/>
        <label>1</label>
        <note>catalytic</note>
    </ligand>
</feature>
<feature type="binding site" evidence="1">
    <location>
        <position position="93"/>
    </location>
    <ligand>
        <name>Zn(2+)</name>
        <dbReference type="ChEBI" id="CHEBI:29105"/>
        <label>2</label>
    </ligand>
</feature>
<feature type="binding site" evidence="1">
    <location>
        <position position="96"/>
    </location>
    <ligand>
        <name>Zn(2+)</name>
        <dbReference type="ChEBI" id="CHEBI:29105"/>
        <label>2</label>
    </ligand>
</feature>
<feature type="binding site" evidence="1">
    <location>
        <position position="99"/>
    </location>
    <ligand>
        <name>Zn(2+)</name>
        <dbReference type="ChEBI" id="CHEBI:29105"/>
        <label>2</label>
    </ligand>
</feature>
<feature type="binding site" evidence="1">
    <location>
        <position position="107"/>
    </location>
    <ligand>
        <name>Zn(2+)</name>
        <dbReference type="ChEBI" id="CHEBI:29105"/>
        <label>2</label>
    </ligand>
</feature>
<feature type="binding site" evidence="1">
    <location>
        <position position="175"/>
    </location>
    <ligand>
        <name>NAD(+)</name>
        <dbReference type="ChEBI" id="CHEBI:57540"/>
    </ligand>
</feature>
<feature type="binding site" evidence="1">
    <location>
        <position position="195"/>
    </location>
    <ligand>
        <name>NAD(+)</name>
        <dbReference type="ChEBI" id="CHEBI:57540"/>
    </ligand>
</feature>
<feature type="binding site" evidence="1">
    <location>
        <position position="200"/>
    </location>
    <ligand>
        <name>NAD(+)</name>
        <dbReference type="ChEBI" id="CHEBI:57540"/>
    </ligand>
</feature>
<feature type="binding site" evidence="1">
    <location>
        <begin position="262"/>
        <end position="264"/>
    </location>
    <ligand>
        <name>NAD(+)</name>
        <dbReference type="ChEBI" id="CHEBI:57540"/>
    </ligand>
</feature>
<feature type="binding site" evidence="1">
    <location>
        <begin position="286"/>
        <end position="287"/>
    </location>
    <ligand>
        <name>NAD(+)</name>
        <dbReference type="ChEBI" id="CHEBI:57540"/>
    </ligand>
</feature>
<feature type="site" description="Important for catalytic activity for the proton relay mechanism but does not participate directly in the coordination of zinc atom" evidence="1">
    <location>
        <position position="148"/>
    </location>
</feature>
<gene>
    <name evidence="1" type="primary">tdh</name>
    <name type="ordered locus">EC55989_4083</name>
</gene>
<protein>
    <recommendedName>
        <fullName evidence="1">L-threonine 3-dehydrogenase</fullName>
        <shortName evidence="1">TDH</shortName>
        <ecNumber evidence="1">1.1.1.103</ecNumber>
    </recommendedName>
</protein>
<accession>B7L742</accession>
<reference key="1">
    <citation type="journal article" date="2009" name="PLoS Genet.">
        <title>Organised genome dynamics in the Escherichia coli species results in highly diverse adaptive paths.</title>
        <authorList>
            <person name="Touchon M."/>
            <person name="Hoede C."/>
            <person name="Tenaillon O."/>
            <person name="Barbe V."/>
            <person name="Baeriswyl S."/>
            <person name="Bidet P."/>
            <person name="Bingen E."/>
            <person name="Bonacorsi S."/>
            <person name="Bouchier C."/>
            <person name="Bouvet O."/>
            <person name="Calteau A."/>
            <person name="Chiapello H."/>
            <person name="Clermont O."/>
            <person name="Cruveiller S."/>
            <person name="Danchin A."/>
            <person name="Diard M."/>
            <person name="Dossat C."/>
            <person name="Karoui M.E."/>
            <person name="Frapy E."/>
            <person name="Garry L."/>
            <person name="Ghigo J.M."/>
            <person name="Gilles A.M."/>
            <person name="Johnson J."/>
            <person name="Le Bouguenec C."/>
            <person name="Lescat M."/>
            <person name="Mangenot S."/>
            <person name="Martinez-Jehanne V."/>
            <person name="Matic I."/>
            <person name="Nassif X."/>
            <person name="Oztas S."/>
            <person name="Petit M.A."/>
            <person name="Pichon C."/>
            <person name="Rouy Z."/>
            <person name="Ruf C.S."/>
            <person name="Schneider D."/>
            <person name="Tourret J."/>
            <person name="Vacherie B."/>
            <person name="Vallenet D."/>
            <person name="Medigue C."/>
            <person name="Rocha E.P.C."/>
            <person name="Denamur E."/>
        </authorList>
    </citation>
    <scope>NUCLEOTIDE SEQUENCE [LARGE SCALE GENOMIC DNA]</scope>
    <source>
        <strain>55989 / EAEC</strain>
    </source>
</reference>
<organism>
    <name type="scientific">Escherichia coli (strain 55989 / EAEC)</name>
    <dbReference type="NCBI Taxonomy" id="585055"/>
    <lineage>
        <taxon>Bacteria</taxon>
        <taxon>Pseudomonadati</taxon>
        <taxon>Pseudomonadota</taxon>
        <taxon>Gammaproteobacteria</taxon>
        <taxon>Enterobacterales</taxon>
        <taxon>Enterobacteriaceae</taxon>
        <taxon>Escherichia</taxon>
    </lineage>
</organism>
<name>TDH_ECO55</name>
<keyword id="KW-0963">Cytoplasm</keyword>
<keyword id="KW-0479">Metal-binding</keyword>
<keyword id="KW-0520">NAD</keyword>
<keyword id="KW-0560">Oxidoreductase</keyword>
<keyword id="KW-1185">Reference proteome</keyword>
<keyword id="KW-0862">Zinc</keyword>
<comment type="function">
    <text evidence="1">Catalyzes the NAD(+)-dependent oxidation of L-threonine to 2-amino-3-ketobutyrate.</text>
</comment>
<comment type="catalytic activity">
    <reaction evidence="1">
        <text>L-threonine + NAD(+) = (2S)-2-amino-3-oxobutanoate + NADH + H(+)</text>
        <dbReference type="Rhea" id="RHEA:13161"/>
        <dbReference type="ChEBI" id="CHEBI:15378"/>
        <dbReference type="ChEBI" id="CHEBI:57540"/>
        <dbReference type="ChEBI" id="CHEBI:57926"/>
        <dbReference type="ChEBI" id="CHEBI:57945"/>
        <dbReference type="ChEBI" id="CHEBI:78948"/>
        <dbReference type="EC" id="1.1.1.103"/>
    </reaction>
</comment>
<comment type="cofactor">
    <cofactor evidence="1">
        <name>Zn(2+)</name>
        <dbReference type="ChEBI" id="CHEBI:29105"/>
    </cofactor>
    <text evidence="1">Binds 2 Zn(2+) ions per subunit.</text>
</comment>
<comment type="pathway">
    <text evidence="1">Amino-acid degradation; L-threonine degradation via oxydo-reductase pathway; glycine from L-threonine: step 1/2.</text>
</comment>
<comment type="subunit">
    <text evidence="1">Homotetramer.</text>
</comment>
<comment type="subcellular location">
    <subcellularLocation>
        <location evidence="1">Cytoplasm</location>
    </subcellularLocation>
</comment>
<comment type="similarity">
    <text evidence="1">Belongs to the zinc-containing alcohol dehydrogenase family.</text>
</comment>